<accession>P33214</accession>
<accession>P39093</accession>
<reference key="1">
    <citation type="journal article" date="1993" name="Mol. Microbiol.">
        <title>Molecular cloning and characterization of a sym plasmid locus that regulates cultivar-specific nodulation of soybean by Rhizobium fredii USDA257.</title>
        <authorList>
            <person name="Meinhardt L.W."/>
            <person name="Krishnan H.B."/>
            <person name="Balatti P.A."/>
            <person name="Pueppke S.G."/>
        </authorList>
    </citation>
    <scope>NUCLEOTIDE SEQUENCE [GENOMIC DNA]</scope>
    <source>
        <strain>USDA 257</strain>
    </source>
</reference>
<keyword id="KW-0614">Plasmid</keyword>
<feature type="chain" id="PRO_0000066336" description="Uncharacterized 7.1 kDa protein in nolU-nolV intergenic region">
    <location>
        <begin position="1"/>
        <end position="65"/>
    </location>
</feature>
<protein>
    <recommendedName>
        <fullName>Uncharacterized 7.1 kDa protein in nolU-nolV intergenic region</fullName>
    </recommendedName>
    <alternativeName>
        <fullName>ORF4</fullName>
    </alternativeName>
</protein>
<geneLocation type="plasmid">
    <name>sym</name>
</geneLocation>
<proteinExistence type="predicted"/>
<dbReference type="EMBL" id="L12251">
    <property type="protein sequence ID" value="AAB17679.1"/>
    <property type="molecule type" value="Genomic_DNA"/>
</dbReference>
<dbReference type="PIR" id="S35024">
    <property type="entry name" value="S35024"/>
</dbReference>
<dbReference type="InterPro" id="IPR010586">
    <property type="entry name" value="T3SS_stator_protein"/>
</dbReference>
<dbReference type="Pfam" id="PF06635">
    <property type="entry name" value="T3SS_SCTL"/>
    <property type="match status" value="1"/>
</dbReference>
<sequence length="65" mass="7114">MTADISAAPVAPQMRPLGPLIPASELNIWHSAGDALAAAKRHQQRVRTWARAAYQRERARATPRG</sequence>
<name>YNOL_RHIFR</name>
<organism>
    <name type="scientific">Rhizobium fredii</name>
    <name type="common">Sinorhizobium fredii</name>
    <dbReference type="NCBI Taxonomy" id="380"/>
    <lineage>
        <taxon>Bacteria</taxon>
        <taxon>Pseudomonadati</taxon>
        <taxon>Pseudomonadota</taxon>
        <taxon>Alphaproteobacteria</taxon>
        <taxon>Hyphomicrobiales</taxon>
        <taxon>Rhizobiaceae</taxon>
        <taxon>Sinorhizobium/Ensifer group</taxon>
        <taxon>Sinorhizobium</taxon>
    </lineage>
</organism>